<sequence>MLHTLHRSPWLTDFAALLRLLSEGDELLLLQDGVTAAVDGNRYLESLRNAPIKVYALNEDLIARGLTGQISNDIIPIDYTDFVRLTVKHTSQLAW</sequence>
<dbReference type="EMBL" id="CU928158">
    <property type="protein sequence ID" value="CAQ90792.1"/>
    <property type="molecule type" value="Genomic_DNA"/>
</dbReference>
<dbReference type="RefSeq" id="WP_000903378.1">
    <property type="nucleotide sequence ID" value="NC_011740.1"/>
</dbReference>
<dbReference type="SMR" id="B7LS49"/>
<dbReference type="GeneID" id="75060077"/>
<dbReference type="KEGG" id="efe:EFER_3313"/>
<dbReference type="HOGENOM" id="CLU_166087_2_1_6"/>
<dbReference type="OrthoDB" id="9795117at2"/>
<dbReference type="Proteomes" id="UP000000745">
    <property type="component" value="Chromosome"/>
</dbReference>
<dbReference type="GO" id="GO:1990228">
    <property type="term" value="C:sulfurtransferase complex"/>
    <property type="evidence" value="ECO:0007669"/>
    <property type="project" value="TreeGrafter"/>
</dbReference>
<dbReference type="GO" id="GO:0002143">
    <property type="term" value="P:tRNA wobble position uridine thiolation"/>
    <property type="evidence" value="ECO:0007669"/>
    <property type="project" value="InterPro"/>
</dbReference>
<dbReference type="FunFam" id="3.40.1260.10:FF:000002">
    <property type="entry name" value="Sulfurtransferase TusB"/>
    <property type="match status" value="1"/>
</dbReference>
<dbReference type="Gene3D" id="3.40.1260.10">
    <property type="entry name" value="DsrEFH-like"/>
    <property type="match status" value="1"/>
</dbReference>
<dbReference type="HAMAP" id="MF_01564">
    <property type="entry name" value="Thiourid_synth_B"/>
    <property type="match status" value="1"/>
</dbReference>
<dbReference type="InterPro" id="IPR027396">
    <property type="entry name" value="DsrEFH-like"/>
</dbReference>
<dbReference type="InterPro" id="IPR023526">
    <property type="entry name" value="Sulphur_relay_TusB"/>
</dbReference>
<dbReference type="InterPro" id="IPR007215">
    <property type="entry name" value="Sulphur_relay_TusB/DsrH"/>
</dbReference>
<dbReference type="NCBIfam" id="NF010035">
    <property type="entry name" value="PRK13510.1"/>
    <property type="match status" value="1"/>
</dbReference>
<dbReference type="NCBIfam" id="TIGR03011">
    <property type="entry name" value="sulf_tusB_dsrH"/>
    <property type="match status" value="1"/>
</dbReference>
<dbReference type="PANTHER" id="PTHR37526">
    <property type="entry name" value="PROTEIN TUSB"/>
    <property type="match status" value="1"/>
</dbReference>
<dbReference type="PANTHER" id="PTHR37526:SF1">
    <property type="entry name" value="PROTEIN TUSB"/>
    <property type="match status" value="1"/>
</dbReference>
<dbReference type="Pfam" id="PF04077">
    <property type="entry name" value="DsrH"/>
    <property type="match status" value="1"/>
</dbReference>
<dbReference type="SUPFAM" id="SSF75169">
    <property type="entry name" value="DsrEFH-like"/>
    <property type="match status" value="1"/>
</dbReference>
<gene>
    <name evidence="1" type="primary">tusB</name>
    <name type="ordered locus">EFER_3313</name>
</gene>
<proteinExistence type="inferred from homology"/>
<reference key="1">
    <citation type="journal article" date="2009" name="PLoS Genet.">
        <title>Organised genome dynamics in the Escherichia coli species results in highly diverse adaptive paths.</title>
        <authorList>
            <person name="Touchon M."/>
            <person name="Hoede C."/>
            <person name="Tenaillon O."/>
            <person name="Barbe V."/>
            <person name="Baeriswyl S."/>
            <person name="Bidet P."/>
            <person name="Bingen E."/>
            <person name="Bonacorsi S."/>
            <person name="Bouchier C."/>
            <person name="Bouvet O."/>
            <person name="Calteau A."/>
            <person name="Chiapello H."/>
            <person name="Clermont O."/>
            <person name="Cruveiller S."/>
            <person name="Danchin A."/>
            <person name="Diard M."/>
            <person name="Dossat C."/>
            <person name="Karoui M.E."/>
            <person name="Frapy E."/>
            <person name="Garry L."/>
            <person name="Ghigo J.M."/>
            <person name="Gilles A.M."/>
            <person name="Johnson J."/>
            <person name="Le Bouguenec C."/>
            <person name="Lescat M."/>
            <person name="Mangenot S."/>
            <person name="Martinez-Jehanne V."/>
            <person name="Matic I."/>
            <person name="Nassif X."/>
            <person name="Oztas S."/>
            <person name="Petit M.A."/>
            <person name="Pichon C."/>
            <person name="Rouy Z."/>
            <person name="Ruf C.S."/>
            <person name="Schneider D."/>
            <person name="Tourret J."/>
            <person name="Vacherie B."/>
            <person name="Vallenet D."/>
            <person name="Medigue C."/>
            <person name="Rocha E.P.C."/>
            <person name="Denamur E."/>
        </authorList>
    </citation>
    <scope>NUCLEOTIDE SEQUENCE [LARGE SCALE GENOMIC DNA]</scope>
    <source>
        <strain>ATCC 35469 / DSM 13698 / BCRC 15582 / CCUG 18766 / IAM 14443 / JCM 21226 / LMG 7866 / NBRC 102419 / NCTC 12128 / CDC 0568-73</strain>
    </source>
</reference>
<comment type="function">
    <text evidence="1">Part of a sulfur-relay system required for 2-thiolation of 5-methylaminomethyl-2-thiouridine (mnm(5)s(2)U) at tRNA wobble positions.</text>
</comment>
<comment type="subunit">
    <text evidence="1">Heterohexamer, formed by a dimer of trimers. The hexameric TusBCD complex contains 2 copies each of TusB, TusC and TusD. The TusBCD complex interacts with TusE.</text>
</comment>
<comment type="subcellular location">
    <subcellularLocation>
        <location evidence="1">Cytoplasm</location>
    </subcellularLocation>
</comment>
<comment type="similarity">
    <text evidence="1">Belongs to the DsrH/TusB family.</text>
</comment>
<organism>
    <name type="scientific">Escherichia fergusonii (strain ATCC 35469 / DSM 13698 / CCUG 18766 / IAM 14443 / JCM 21226 / LMG 7866 / NBRC 102419 / NCTC 12128 / CDC 0568-73)</name>
    <dbReference type="NCBI Taxonomy" id="585054"/>
    <lineage>
        <taxon>Bacteria</taxon>
        <taxon>Pseudomonadati</taxon>
        <taxon>Pseudomonadota</taxon>
        <taxon>Gammaproteobacteria</taxon>
        <taxon>Enterobacterales</taxon>
        <taxon>Enterobacteriaceae</taxon>
        <taxon>Escherichia</taxon>
    </lineage>
</organism>
<accession>B7LS49</accession>
<evidence type="ECO:0000255" key="1">
    <source>
        <dbReference type="HAMAP-Rule" id="MF_01564"/>
    </source>
</evidence>
<feature type="chain" id="PRO_1000189840" description="Protein TusB">
    <location>
        <begin position="1"/>
        <end position="95"/>
    </location>
</feature>
<name>TUSB_ESCF3</name>
<keyword id="KW-0963">Cytoplasm</keyword>
<keyword id="KW-0819">tRNA processing</keyword>
<protein>
    <recommendedName>
        <fullName evidence="1">Protein TusB</fullName>
    </recommendedName>
    <alternativeName>
        <fullName evidence="1">tRNA 2-thiouridine synthesizing protein B</fullName>
    </alternativeName>
</protein>